<feature type="chain" id="PRO_0000310763" description="eEF1A lysine and N-terminal methyltransferase">
    <location>
        <begin position="1"/>
        <end position="693"/>
    </location>
</feature>
<accession>Q6NTR1</accession>
<protein>
    <recommendedName>
        <fullName evidence="1">eEF1A lysine and N-terminal methyltransferase</fullName>
    </recommendedName>
    <alternativeName>
        <fullName evidence="1">Methyltransferase-like protein 13</fullName>
    </alternativeName>
    <domain>
        <recommendedName>
            <fullName evidence="1">eEF1A lysine methyltransferase</fullName>
            <ecNumber evidence="1">2.1.1.-</ecNumber>
        </recommendedName>
    </domain>
    <domain>
        <recommendedName>
            <fullName evidence="1">eEF1A N-terminal methyltransferase</fullName>
            <ecNumber evidence="1">2.1.1.-</ecNumber>
        </recommendedName>
    </domain>
</protein>
<gene>
    <name type="primary">mettl13</name>
    <name evidence="1" type="synonym">eef1aknmt</name>
</gene>
<evidence type="ECO:0000250" key="1">
    <source>
        <dbReference type="UniProtKB" id="Q8N6R0"/>
    </source>
</evidence>
<evidence type="ECO:0000305" key="2"/>
<sequence length="693" mass="78325">MDLLPKSSKEFAAPEYWEQFFRRRGERAFEWYGGYLELCGLLHKYIKPRDKVFVVGCGNSELSEQLYDAGCQNLTNIDVSEVVIRQMNERNSNRRPNMTFQVMDATQTTFDDSCFQAVLDKGTLDAIMTDTDKGTLETADKLMSEIGRVLTCGGRFLCVSLAQAHVLEKLVRHFSQGGWMVRVHQVMQGSTSETGSQFPMPVFVFVMTKVRQISGFPTVLEMMPDEEGGKPVRWGSPEEFMEAVKERQRYALIRNRLNQNQSSQEVSLDLCDGDSRKSRYTFYIVDSPAVRLSHSNHFAIFIIPHGRETEWLFGSEQGRKQLAGSVGFNRLIIVALHRDQQYTDMKAIQSELSAKVLELAPPGLPDNQQIPFLSAGEDIGSRTIQHRGKSEFSGEYVVEDVRGDGNSSYRRLIFLSNQNVVQSEARLLPISTHIGQKKRKDKKKQQKPVKDLEQPTITRIDKSYLCCEHHKAMISGLALLPNPGLLPECQASVLVIGLGGGSLSLFIHDYFPGSRVEVVEIDPSVLDVASNWFNFCQDERMKVHLADGLVHINSLADNGEACYDVIMFDVDSKDPSVGMSCPPPAFVEKMFLQNVHNILNANGVFILNLVCRDTDLRLKVLNVLHEVFPLIYAQKIDEEVNEILFCRPNSERKFSSLELKESAKNLEKKLRKPGVQWDSTYSLAEMLKSVQIV</sequence>
<organism>
    <name type="scientific">Xenopus laevis</name>
    <name type="common">African clawed frog</name>
    <dbReference type="NCBI Taxonomy" id="8355"/>
    <lineage>
        <taxon>Eukaryota</taxon>
        <taxon>Metazoa</taxon>
        <taxon>Chordata</taxon>
        <taxon>Craniata</taxon>
        <taxon>Vertebrata</taxon>
        <taxon>Euteleostomi</taxon>
        <taxon>Amphibia</taxon>
        <taxon>Batrachia</taxon>
        <taxon>Anura</taxon>
        <taxon>Pipoidea</taxon>
        <taxon>Pipidae</taxon>
        <taxon>Xenopodinae</taxon>
        <taxon>Xenopus</taxon>
        <taxon>Xenopus</taxon>
    </lineage>
</organism>
<keyword id="KW-0489">Methyltransferase</keyword>
<keyword id="KW-0511">Multifunctional enzyme</keyword>
<keyword id="KW-1185">Reference proteome</keyword>
<keyword id="KW-0808">Transferase</keyword>
<comment type="function">
    <text evidence="1">Dual methyltransferase that catalyzes methylation of elongation factor 1-alpha (eef1a1 and eef1a2) at two different positions, and is therefore involved in the regulation of mRNA translation. Via its C-terminus, methylates the N-terminus of eef1a1 and eef1a2. Via its N-terminus dimethylates lysine residues of eef1a1 and eef1a2.</text>
</comment>
<comment type="catalytic activity">
    <reaction evidence="1">
        <text>L-lysyl-[protein] + S-adenosyl-L-methionine = N(6)-methyl-L-lysyl-[protein] + S-adenosyl-L-homocysteine + H(+)</text>
        <dbReference type="Rhea" id="RHEA:51736"/>
        <dbReference type="Rhea" id="RHEA-COMP:9752"/>
        <dbReference type="Rhea" id="RHEA-COMP:13053"/>
        <dbReference type="ChEBI" id="CHEBI:15378"/>
        <dbReference type="ChEBI" id="CHEBI:29969"/>
        <dbReference type="ChEBI" id="CHEBI:57856"/>
        <dbReference type="ChEBI" id="CHEBI:59789"/>
        <dbReference type="ChEBI" id="CHEBI:61929"/>
    </reaction>
</comment>
<comment type="catalytic activity">
    <reaction evidence="1">
        <text>N(6)-methyl-L-lysyl-[protein] + S-adenosyl-L-methionine = N(6),N(6)-dimethyl-L-lysyl-[protein] + S-adenosyl-L-homocysteine + H(+)</text>
        <dbReference type="Rhea" id="RHEA:54196"/>
        <dbReference type="Rhea" id="RHEA-COMP:13053"/>
        <dbReference type="Rhea" id="RHEA-COMP:13827"/>
        <dbReference type="ChEBI" id="CHEBI:15378"/>
        <dbReference type="ChEBI" id="CHEBI:57856"/>
        <dbReference type="ChEBI" id="CHEBI:59789"/>
        <dbReference type="ChEBI" id="CHEBI:61929"/>
        <dbReference type="ChEBI" id="CHEBI:61976"/>
    </reaction>
</comment>
<comment type="catalytic activity">
    <reaction evidence="1">
        <text>N-terminal glycyl-L-lysyl-L-glutamyl-[protein] + 3 S-adenosyl-L-methionine = N-terminal N,N,N-trimethyl-glycyl-L-lysyl-L-glutamyl-[protein] + 3 S-adenosyl-L-homocysteine + 3 H(+)</text>
        <dbReference type="Rhea" id="RHEA:58440"/>
        <dbReference type="Rhea" id="RHEA-COMP:15140"/>
        <dbReference type="Rhea" id="RHEA-COMP:15143"/>
        <dbReference type="ChEBI" id="CHEBI:15378"/>
        <dbReference type="ChEBI" id="CHEBI:57856"/>
        <dbReference type="ChEBI" id="CHEBI:59789"/>
        <dbReference type="ChEBI" id="CHEBI:142597"/>
        <dbReference type="ChEBI" id="CHEBI:142600"/>
    </reaction>
</comment>
<comment type="similarity">
    <text evidence="2">Belongs to the methyltransferase superfamily.</text>
</comment>
<reference key="1">
    <citation type="submission" date="2004-04" db="EMBL/GenBank/DDBJ databases">
        <authorList>
            <consortium name="NIH - Xenopus Gene Collection (XGC) project"/>
        </authorList>
    </citation>
    <scope>NUCLEOTIDE SEQUENCE [LARGE SCALE MRNA]</scope>
    <source>
        <tissue>Ovary</tissue>
    </source>
</reference>
<name>EFNMT_XENLA</name>
<dbReference type="EC" id="2.1.1.-" evidence="1"/>
<dbReference type="EMBL" id="BC068895">
    <property type="protein sequence ID" value="AAH68895.1"/>
    <property type="molecule type" value="mRNA"/>
</dbReference>
<dbReference type="RefSeq" id="NP_001084718.1">
    <property type="nucleotide sequence ID" value="NM_001091249.1"/>
</dbReference>
<dbReference type="SMR" id="Q6NTR1"/>
<dbReference type="DNASU" id="414682"/>
<dbReference type="GeneID" id="414682"/>
<dbReference type="KEGG" id="xla:414682"/>
<dbReference type="AGR" id="Xenbase:XB-GENE-965492"/>
<dbReference type="CTD" id="414682"/>
<dbReference type="Xenbase" id="XB-GENE-965492">
    <property type="gene designation" value="mettl13.S"/>
</dbReference>
<dbReference type="OrthoDB" id="411785at2759"/>
<dbReference type="Proteomes" id="UP000186698">
    <property type="component" value="Chromosome 4S"/>
</dbReference>
<dbReference type="Bgee" id="414682">
    <property type="expression patterns" value="Expressed in oocyte and 19 other cell types or tissues"/>
</dbReference>
<dbReference type="GO" id="GO:0016279">
    <property type="term" value="F:protein-lysine N-methyltransferase activity"/>
    <property type="evidence" value="ECO:0007669"/>
    <property type="project" value="RHEA"/>
</dbReference>
<dbReference type="GO" id="GO:0032259">
    <property type="term" value="P:methylation"/>
    <property type="evidence" value="ECO:0007669"/>
    <property type="project" value="UniProtKB-KW"/>
</dbReference>
<dbReference type="CDD" id="cd02440">
    <property type="entry name" value="AdoMet_MTases"/>
    <property type="match status" value="2"/>
</dbReference>
<dbReference type="FunFam" id="3.40.50.150:FF:000110">
    <property type="entry name" value="methyltransferase-like protein 13 isoform X1"/>
    <property type="match status" value="1"/>
</dbReference>
<dbReference type="FunFam" id="3.40.50.150:FF:000150">
    <property type="entry name" value="methyltransferase-like protein 13 isoform X1"/>
    <property type="match status" value="1"/>
</dbReference>
<dbReference type="Gene3D" id="3.40.50.150">
    <property type="entry name" value="Vaccinia Virus protein VP39"/>
    <property type="match status" value="2"/>
</dbReference>
<dbReference type="InterPro" id="IPR051419">
    <property type="entry name" value="Lys/N-term_MeTrsfase_sf"/>
</dbReference>
<dbReference type="InterPro" id="IPR025714">
    <property type="entry name" value="Methyltranfer_dom"/>
</dbReference>
<dbReference type="InterPro" id="IPR029063">
    <property type="entry name" value="SAM-dependent_MTases_sf"/>
</dbReference>
<dbReference type="NCBIfam" id="NF037959">
    <property type="entry name" value="MFS_SpdSyn"/>
    <property type="match status" value="1"/>
</dbReference>
<dbReference type="PANTHER" id="PTHR12176:SF80">
    <property type="entry name" value="EEF1A LYSINE METHYLTRANSFERASE 4"/>
    <property type="match status" value="1"/>
</dbReference>
<dbReference type="PANTHER" id="PTHR12176">
    <property type="entry name" value="SAM-DEPENDENT METHYLTRANSFERASE SUPERFAMILY PROTEIN"/>
    <property type="match status" value="1"/>
</dbReference>
<dbReference type="Pfam" id="PF13847">
    <property type="entry name" value="Methyltransf_31"/>
    <property type="match status" value="1"/>
</dbReference>
<dbReference type="Pfam" id="PF01564">
    <property type="entry name" value="Spermine_synth"/>
    <property type="match status" value="1"/>
</dbReference>
<dbReference type="SUPFAM" id="SSF53335">
    <property type="entry name" value="S-adenosyl-L-methionine-dependent methyltransferases"/>
    <property type="match status" value="2"/>
</dbReference>
<proteinExistence type="evidence at transcript level"/>